<accession>Q8K920</accession>
<sequence>MEVILLSKIKKLGDSGAIVHVKSGYARNFLIPKGKAILASKKNIESFEAQRVELEKENISKLLIAQSRAEKIKTIKSITIPSKVGKEGKIFGSIGIRNIIKEMNLLGIKVNKKEIKLPNGVLRQVGEHKVIFQPHNEVCEYFIVNIISKK</sequence>
<protein>
    <recommendedName>
        <fullName evidence="1">Large ribosomal subunit protein bL9</fullName>
    </recommendedName>
    <alternativeName>
        <fullName evidence="2">50S ribosomal protein L9</fullName>
    </alternativeName>
</protein>
<keyword id="KW-0687">Ribonucleoprotein</keyword>
<keyword id="KW-0689">Ribosomal protein</keyword>
<keyword id="KW-0694">RNA-binding</keyword>
<keyword id="KW-0699">rRNA-binding</keyword>
<reference key="1">
    <citation type="journal article" date="2002" name="Science">
        <title>50 million years of genomic stasis in endosymbiotic bacteria.</title>
        <authorList>
            <person name="Tamas I."/>
            <person name="Klasson L."/>
            <person name="Canbaeck B."/>
            <person name="Naeslund A.K."/>
            <person name="Eriksson A.-S."/>
            <person name="Wernegreen J.J."/>
            <person name="Sandstroem J.P."/>
            <person name="Moran N.A."/>
            <person name="Andersson S.G.E."/>
        </authorList>
    </citation>
    <scope>NUCLEOTIDE SEQUENCE [LARGE SCALE GENOMIC DNA]</scope>
    <source>
        <strain>Sg</strain>
    </source>
</reference>
<organism>
    <name type="scientific">Buchnera aphidicola subsp. Schizaphis graminum (strain Sg)</name>
    <dbReference type="NCBI Taxonomy" id="198804"/>
    <lineage>
        <taxon>Bacteria</taxon>
        <taxon>Pseudomonadati</taxon>
        <taxon>Pseudomonadota</taxon>
        <taxon>Gammaproteobacteria</taxon>
        <taxon>Enterobacterales</taxon>
        <taxon>Erwiniaceae</taxon>
        <taxon>Buchnera</taxon>
    </lineage>
</organism>
<name>RL9_BUCAP</name>
<evidence type="ECO:0000255" key="1">
    <source>
        <dbReference type="HAMAP-Rule" id="MF_00503"/>
    </source>
</evidence>
<evidence type="ECO:0000305" key="2"/>
<proteinExistence type="inferred from homology"/>
<dbReference type="EMBL" id="AE013218">
    <property type="protein sequence ID" value="AAM68081.1"/>
    <property type="molecule type" value="Genomic_DNA"/>
</dbReference>
<dbReference type="RefSeq" id="WP_011054047.1">
    <property type="nucleotide sequence ID" value="NC_004061.1"/>
</dbReference>
<dbReference type="SMR" id="Q8K920"/>
<dbReference type="STRING" id="198804.BUsg_542"/>
<dbReference type="GeneID" id="93004019"/>
<dbReference type="KEGG" id="bas:BUsg_542"/>
<dbReference type="eggNOG" id="COG0359">
    <property type="taxonomic scope" value="Bacteria"/>
</dbReference>
<dbReference type="HOGENOM" id="CLU_078938_4_1_6"/>
<dbReference type="Proteomes" id="UP000000416">
    <property type="component" value="Chromosome"/>
</dbReference>
<dbReference type="GO" id="GO:1990904">
    <property type="term" value="C:ribonucleoprotein complex"/>
    <property type="evidence" value="ECO:0007669"/>
    <property type="project" value="UniProtKB-KW"/>
</dbReference>
<dbReference type="GO" id="GO:0005840">
    <property type="term" value="C:ribosome"/>
    <property type="evidence" value="ECO:0007669"/>
    <property type="project" value="UniProtKB-KW"/>
</dbReference>
<dbReference type="GO" id="GO:0019843">
    <property type="term" value="F:rRNA binding"/>
    <property type="evidence" value="ECO:0007669"/>
    <property type="project" value="UniProtKB-UniRule"/>
</dbReference>
<dbReference type="GO" id="GO:0003735">
    <property type="term" value="F:structural constituent of ribosome"/>
    <property type="evidence" value="ECO:0007669"/>
    <property type="project" value="InterPro"/>
</dbReference>
<dbReference type="GO" id="GO:0006412">
    <property type="term" value="P:translation"/>
    <property type="evidence" value="ECO:0007669"/>
    <property type="project" value="UniProtKB-UniRule"/>
</dbReference>
<dbReference type="Gene3D" id="3.10.430.100">
    <property type="entry name" value="Ribosomal protein L9, C-terminal domain"/>
    <property type="match status" value="1"/>
</dbReference>
<dbReference type="Gene3D" id="3.40.5.10">
    <property type="entry name" value="Ribosomal protein L9, N-terminal domain"/>
    <property type="match status" value="1"/>
</dbReference>
<dbReference type="HAMAP" id="MF_00503">
    <property type="entry name" value="Ribosomal_bL9"/>
    <property type="match status" value="1"/>
</dbReference>
<dbReference type="InterPro" id="IPR000244">
    <property type="entry name" value="Ribosomal_bL9"/>
</dbReference>
<dbReference type="InterPro" id="IPR009027">
    <property type="entry name" value="Ribosomal_bL9/RNase_H1_N"/>
</dbReference>
<dbReference type="InterPro" id="IPR020594">
    <property type="entry name" value="Ribosomal_bL9_bac/chp"/>
</dbReference>
<dbReference type="InterPro" id="IPR020069">
    <property type="entry name" value="Ribosomal_bL9_C"/>
</dbReference>
<dbReference type="InterPro" id="IPR036791">
    <property type="entry name" value="Ribosomal_bL9_C_sf"/>
</dbReference>
<dbReference type="InterPro" id="IPR020070">
    <property type="entry name" value="Ribosomal_bL9_N"/>
</dbReference>
<dbReference type="InterPro" id="IPR036935">
    <property type="entry name" value="Ribosomal_bL9_N_sf"/>
</dbReference>
<dbReference type="NCBIfam" id="TIGR00158">
    <property type="entry name" value="L9"/>
    <property type="match status" value="1"/>
</dbReference>
<dbReference type="PANTHER" id="PTHR21368">
    <property type="entry name" value="50S RIBOSOMAL PROTEIN L9"/>
    <property type="match status" value="1"/>
</dbReference>
<dbReference type="Pfam" id="PF03948">
    <property type="entry name" value="Ribosomal_L9_C"/>
    <property type="match status" value="1"/>
</dbReference>
<dbReference type="Pfam" id="PF01281">
    <property type="entry name" value="Ribosomal_L9_N"/>
    <property type="match status" value="1"/>
</dbReference>
<dbReference type="SUPFAM" id="SSF55658">
    <property type="entry name" value="L9 N-domain-like"/>
    <property type="match status" value="1"/>
</dbReference>
<dbReference type="SUPFAM" id="SSF55653">
    <property type="entry name" value="Ribosomal protein L9 C-domain"/>
    <property type="match status" value="1"/>
</dbReference>
<dbReference type="PROSITE" id="PS00651">
    <property type="entry name" value="RIBOSOMAL_L9"/>
    <property type="match status" value="1"/>
</dbReference>
<feature type="chain" id="PRO_0000176623" description="Large ribosomal subunit protein bL9">
    <location>
        <begin position="1"/>
        <end position="150"/>
    </location>
</feature>
<gene>
    <name evidence="1" type="primary">rplI</name>
    <name type="ordered locus">BUsg_542</name>
</gene>
<comment type="function">
    <text evidence="1">Binds to the 23S rRNA.</text>
</comment>
<comment type="similarity">
    <text evidence="1">Belongs to the bacterial ribosomal protein bL9 family.</text>
</comment>